<protein>
    <recommendedName>
        <fullName>Transposase InsD for insertion element IS2D</fullName>
    </recommendedName>
</protein>
<gene>
    <name type="primary">insD2</name>
    <name type="ordered locus">b1402</name>
    <name type="ordered locus">JW1397</name>
</gene>
<evidence type="ECO:0000255" key="1">
    <source>
        <dbReference type="PROSITE-ProRule" id="PRU00457"/>
    </source>
</evidence>
<keyword id="KW-0233">DNA recombination</keyword>
<keyword id="KW-0238">DNA-binding</keyword>
<keyword id="KW-1185">Reference proteome</keyword>
<keyword id="KW-0814">Transposable element</keyword>
<keyword id="KW-0815">Transposition</keyword>
<name>INSD2_ECOLI</name>
<reference key="1">
    <citation type="journal article" date="1996" name="DNA Res.">
        <title>A 570-kb DNA sequence of the Escherichia coli K-12 genome corresponding to the 28.0-40.1 min region on the linkage map.</title>
        <authorList>
            <person name="Aiba H."/>
            <person name="Baba T."/>
            <person name="Fujita K."/>
            <person name="Hayashi K."/>
            <person name="Inada T."/>
            <person name="Isono K."/>
            <person name="Itoh T."/>
            <person name="Kasai H."/>
            <person name="Kashimoto K."/>
            <person name="Kimura S."/>
            <person name="Kitakawa M."/>
            <person name="Kitagawa M."/>
            <person name="Makino K."/>
            <person name="Miki T."/>
            <person name="Mizobuchi K."/>
            <person name="Mori H."/>
            <person name="Mori T."/>
            <person name="Motomura K."/>
            <person name="Nakade S."/>
            <person name="Nakamura Y."/>
            <person name="Nashimoto H."/>
            <person name="Nishio Y."/>
            <person name="Oshima T."/>
            <person name="Saito N."/>
            <person name="Sampei G."/>
            <person name="Seki Y."/>
            <person name="Sivasundaram S."/>
            <person name="Tagami H."/>
            <person name="Takeda J."/>
            <person name="Takemoto K."/>
            <person name="Takeuchi Y."/>
            <person name="Wada C."/>
            <person name="Yamamoto Y."/>
            <person name="Horiuchi T."/>
        </authorList>
    </citation>
    <scope>NUCLEOTIDE SEQUENCE [LARGE SCALE GENOMIC DNA]</scope>
    <source>
        <strain>K12 / W3110 / ATCC 27325 / DSM 5911</strain>
    </source>
</reference>
<reference key="2">
    <citation type="journal article" date="1997" name="Science">
        <title>The complete genome sequence of Escherichia coli K-12.</title>
        <authorList>
            <person name="Blattner F.R."/>
            <person name="Plunkett G. III"/>
            <person name="Bloch C.A."/>
            <person name="Perna N.T."/>
            <person name="Burland V."/>
            <person name="Riley M."/>
            <person name="Collado-Vides J."/>
            <person name="Glasner J.D."/>
            <person name="Rode C.K."/>
            <person name="Mayhew G.F."/>
            <person name="Gregor J."/>
            <person name="Davis N.W."/>
            <person name="Kirkpatrick H.A."/>
            <person name="Goeden M.A."/>
            <person name="Rose D.J."/>
            <person name="Mau B."/>
            <person name="Shao Y."/>
        </authorList>
    </citation>
    <scope>NUCLEOTIDE SEQUENCE [LARGE SCALE GENOMIC DNA]</scope>
    <source>
        <strain>K12 / MG1655 / ATCC 47076</strain>
    </source>
</reference>
<reference key="3">
    <citation type="journal article" date="2006" name="Mol. Syst. Biol.">
        <title>Highly accurate genome sequences of Escherichia coli K-12 strains MG1655 and W3110.</title>
        <authorList>
            <person name="Hayashi K."/>
            <person name="Morooka N."/>
            <person name="Yamamoto Y."/>
            <person name="Fujita K."/>
            <person name="Isono K."/>
            <person name="Choi S."/>
            <person name="Ohtsubo E."/>
            <person name="Baba T."/>
            <person name="Wanner B.L."/>
            <person name="Mori H."/>
            <person name="Horiuchi T."/>
        </authorList>
    </citation>
    <scope>NUCLEOTIDE SEQUENCE [LARGE SCALE GENOMIC DNA]</scope>
    <source>
        <strain>K12 / W3110 / ATCC 27325 / DSM 5911</strain>
    </source>
</reference>
<comment type="function">
    <text>Involved in the transposition of the insertion sequence IS2.</text>
</comment>
<accession>P0CF54</accession>
<accession>P0C5W4</accession>
<accession>P19777</accession>
<accession>P76167</accession>
<accession>P76916</accession>
<accession>P77033</accession>
<accession>Q79EJ0</accession>
<proteinExistence type="predicted"/>
<feature type="chain" id="PRO_0000393573" description="Transposase InsD for insertion element IS2D">
    <location>
        <begin position="1"/>
        <end position="301"/>
    </location>
</feature>
<feature type="domain" description="Integrase catalytic" evidence="1">
    <location>
        <begin position="106"/>
        <end position="289"/>
    </location>
</feature>
<organism>
    <name type="scientific">Escherichia coli (strain K12)</name>
    <dbReference type="NCBI Taxonomy" id="83333"/>
    <lineage>
        <taxon>Bacteria</taxon>
        <taxon>Pseudomonadati</taxon>
        <taxon>Pseudomonadota</taxon>
        <taxon>Gammaproteobacteria</taxon>
        <taxon>Enterobacterales</taxon>
        <taxon>Enterobacteriaceae</taxon>
        <taxon>Escherichia</taxon>
    </lineage>
</organism>
<dbReference type="EMBL" id="U00096">
    <property type="protein sequence ID" value="AAC74484.1"/>
    <property type="molecule type" value="Genomic_DNA"/>
</dbReference>
<dbReference type="EMBL" id="AP009048">
    <property type="protein sequence ID" value="BAA15010.1"/>
    <property type="molecule type" value="Genomic_DNA"/>
</dbReference>
<dbReference type="PIR" id="A64764">
    <property type="entry name" value="C65092"/>
</dbReference>
<dbReference type="RefSeq" id="NP_061399.1">
    <property type="nucleotide sequence ID" value="NC_002483.1"/>
</dbReference>
<dbReference type="RefSeq" id="NP_415920.1">
    <property type="nucleotide sequence ID" value="NC_000913.3"/>
</dbReference>
<dbReference type="SMR" id="P0CF54"/>
<dbReference type="FunCoup" id="P0CF54">
    <property type="interactions" value="6"/>
</dbReference>
<dbReference type="EnsemblBacteria" id="AAC74484">
    <property type="protein sequence ID" value="AAC74484"/>
    <property type="gene ID" value="b1402"/>
</dbReference>
<dbReference type="GeneID" id="945952"/>
<dbReference type="KEGG" id="ecj:JW1397"/>
<dbReference type="KEGG" id="eco:b0361"/>
<dbReference type="KEGG" id="eco:b1402"/>
<dbReference type="KEGG" id="eco:b1996"/>
<dbReference type="KEGG" id="eco:b2860"/>
<dbReference type="KEGG" id="eco:b3045"/>
<dbReference type="KEGG" id="eco:b4273"/>
<dbReference type="KEGG" id="ecoc:C3026_00665"/>
<dbReference type="KEGG" id="ecoc:C3026_03835"/>
<dbReference type="KEGG" id="ecoc:C3026_06240"/>
<dbReference type="KEGG" id="ecoc:C3026_08175"/>
<dbReference type="KEGG" id="ecoc:C3026_11260"/>
<dbReference type="KEGG" id="ecoc:C3026_15300"/>
<dbReference type="KEGG" id="ecoc:C3026_15695"/>
<dbReference type="KEGG" id="ecoc:C3026_16630"/>
<dbReference type="KEGG" id="ecoc:C3026_23045"/>
<dbReference type="KEGG" id="ecoc:C3026_24215"/>
<dbReference type="EchoBASE" id="EB4724"/>
<dbReference type="HOGENOM" id="CLU_052819_0_0_6"/>
<dbReference type="InParanoid" id="P0CF54"/>
<dbReference type="OMA" id="CHDREAI"/>
<dbReference type="PhylomeDB" id="P0CF54"/>
<dbReference type="BioCyc" id="EcoCyc:MONOMER0-4444"/>
<dbReference type="PRO" id="PR:P0CF54"/>
<dbReference type="Proteomes" id="UP000000625">
    <property type="component" value="Chromosome"/>
</dbReference>
<dbReference type="GO" id="GO:0003677">
    <property type="term" value="F:DNA binding"/>
    <property type="evidence" value="ECO:0007669"/>
    <property type="project" value="UniProtKB-KW"/>
</dbReference>
<dbReference type="GO" id="GO:0015074">
    <property type="term" value="P:DNA integration"/>
    <property type="evidence" value="ECO:0007669"/>
    <property type="project" value="InterPro"/>
</dbReference>
<dbReference type="GO" id="GO:0006310">
    <property type="term" value="P:DNA recombination"/>
    <property type="evidence" value="ECO:0007669"/>
    <property type="project" value="UniProtKB-KW"/>
</dbReference>
<dbReference type="GO" id="GO:0032196">
    <property type="term" value="P:transposition"/>
    <property type="evidence" value="ECO:0007669"/>
    <property type="project" value="UniProtKB-KW"/>
</dbReference>
<dbReference type="Gene3D" id="3.30.420.10">
    <property type="entry name" value="Ribonuclease H-like superfamily/Ribonuclease H"/>
    <property type="match status" value="1"/>
</dbReference>
<dbReference type="InterPro" id="IPR025948">
    <property type="entry name" value="HTH-like_dom"/>
</dbReference>
<dbReference type="InterPro" id="IPR001584">
    <property type="entry name" value="Integrase_cat-core"/>
</dbReference>
<dbReference type="InterPro" id="IPR012337">
    <property type="entry name" value="RNaseH-like_sf"/>
</dbReference>
<dbReference type="InterPro" id="IPR036397">
    <property type="entry name" value="RNaseH_sf"/>
</dbReference>
<dbReference type="InterPro" id="IPR048020">
    <property type="entry name" value="Transpos_IS3"/>
</dbReference>
<dbReference type="NCBIfam" id="NF006918">
    <property type="entry name" value="PRK09409.1"/>
    <property type="match status" value="1"/>
</dbReference>
<dbReference type="NCBIfam" id="NF033516">
    <property type="entry name" value="transpos_IS3"/>
    <property type="match status" value="1"/>
</dbReference>
<dbReference type="PANTHER" id="PTHR37936">
    <property type="entry name" value="TRANSPOSASE INSC FOR INSERTION ELEMENT IS2A-RELATED"/>
    <property type="match status" value="1"/>
</dbReference>
<dbReference type="PANTHER" id="PTHR37936:SF3">
    <property type="entry name" value="TRANSPOSASE INSC FOR INSERTION ELEMENT IS2A-RELATED"/>
    <property type="match status" value="1"/>
</dbReference>
<dbReference type="Pfam" id="PF13276">
    <property type="entry name" value="HTH_21"/>
    <property type="match status" value="1"/>
</dbReference>
<dbReference type="Pfam" id="PF00665">
    <property type="entry name" value="rve"/>
    <property type="match status" value="1"/>
</dbReference>
<dbReference type="SUPFAM" id="SSF53098">
    <property type="entry name" value="Ribonuclease H-like"/>
    <property type="match status" value="1"/>
</dbReference>
<dbReference type="PROSITE" id="PS50994">
    <property type="entry name" value="INTEGRASE"/>
    <property type="match status" value="1"/>
</dbReference>
<sequence>MDSARALIARGWGVSLVSRCLRVSRAQLHVILRRTDDWMDGRRSRHTDDTDVLLRIHHVIGELPTYGYRRVWALLRRQAELDGMPAINAKRVYRIMRQNALLLERKPAVPPSKRAHTGRVAVKESNQRWCSDGFEFCCDNGERLRVTFALDCCDREALHWAVTTGGFNSETVQDVMLGAVERRFGNDLPSSPVEWLTDNGSCYRANETRQFARMLGLEPKNTAVRSPESNGIAESFVKTIKRDYISIMPKPDGLTAAKNLAEAFEHYNEWHPHSALGYRSPREYLRQRACNGLSDNRCLEI</sequence>